<dbReference type="EMBL" id="DQ899947">
    <property type="protein sequence ID" value="ABI32539.1"/>
    <property type="molecule type" value="Genomic_DNA"/>
</dbReference>
<dbReference type="RefSeq" id="YP_740232.1">
    <property type="nucleotide sequence ID" value="NC_008326.1"/>
</dbReference>
<dbReference type="SMR" id="Q0G9I9"/>
<dbReference type="GeneID" id="4266656"/>
<dbReference type="GO" id="GO:0009535">
    <property type="term" value="C:chloroplast thylakoid membrane"/>
    <property type="evidence" value="ECO:0007669"/>
    <property type="project" value="UniProtKB-SubCell"/>
</dbReference>
<dbReference type="GO" id="GO:0045158">
    <property type="term" value="F:electron transporter, transferring electrons within cytochrome b6/f complex of photosystem II activity"/>
    <property type="evidence" value="ECO:0007669"/>
    <property type="project" value="UniProtKB-UniRule"/>
</dbReference>
<dbReference type="GO" id="GO:0046872">
    <property type="term" value="F:metal ion binding"/>
    <property type="evidence" value="ECO:0007669"/>
    <property type="project" value="UniProtKB-KW"/>
</dbReference>
<dbReference type="GO" id="GO:0016491">
    <property type="term" value="F:oxidoreductase activity"/>
    <property type="evidence" value="ECO:0007669"/>
    <property type="project" value="InterPro"/>
</dbReference>
<dbReference type="GO" id="GO:0015979">
    <property type="term" value="P:photosynthesis"/>
    <property type="evidence" value="ECO:0007669"/>
    <property type="project" value="UniProtKB-UniRule"/>
</dbReference>
<dbReference type="GO" id="GO:0022904">
    <property type="term" value="P:respiratory electron transport chain"/>
    <property type="evidence" value="ECO:0007669"/>
    <property type="project" value="InterPro"/>
</dbReference>
<dbReference type="CDD" id="cd00284">
    <property type="entry name" value="Cytochrome_b_N"/>
    <property type="match status" value="1"/>
</dbReference>
<dbReference type="FunFam" id="1.20.810.10:FF:000001">
    <property type="entry name" value="Cytochrome b6"/>
    <property type="match status" value="1"/>
</dbReference>
<dbReference type="Gene3D" id="1.20.810.10">
    <property type="entry name" value="Cytochrome Bc1 Complex, Chain C"/>
    <property type="match status" value="1"/>
</dbReference>
<dbReference type="HAMAP" id="MF_00633">
    <property type="entry name" value="Cytb6_f_cytb6"/>
    <property type="match status" value="1"/>
</dbReference>
<dbReference type="InterPro" id="IPR005797">
    <property type="entry name" value="Cyt_b/b6_N"/>
</dbReference>
<dbReference type="InterPro" id="IPR023530">
    <property type="entry name" value="Cyt_B6_PetB"/>
</dbReference>
<dbReference type="InterPro" id="IPR027387">
    <property type="entry name" value="Cytb/b6-like_sf"/>
</dbReference>
<dbReference type="InterPro" id="IPR048259">
    <property type="entry name" value="Cytochrome_b_N_euk/bac"/>
</dbReference>
<dbReference type="InterPro" id="IPR016174">
    <property type="entry name" value="Di-haem_cyt_TM"/>
</dbReference>
<dbReference type="NCBIfam" id="NF002990">
    <property type="entry name" value="PRK03735.1"/>
    <property type="match status" value="1"/>
</dbReference>
<dbReference type="PANTHER" id="PTHR19271">
    <property type="entry name" value="CYTOCHROME B"/>
    <property type="match status" value="1"/>
</dbReference>
<dbReference type="PANTHER" id="PTHR19271:SF16">
    <property type="entry name" value="CYTOCHROME B"/>
    <property type="match status" value="1"/>
</dbReference>
<dbReference type="Pfam" id="PF00033">
    <property type="entry name" value="Cytochrome_B"/>
    <property type="match status" value="1"/>
</dbReference>
<dbReference type="PIRSF" id="PIRSF000032">
    <property type="entry name" value="Cytochrome_b6"/>
    <property type="match status" value="1"/>
</dbReference>
<dbReference type="SUPFAM" id="SSF81342">
    <property type="entry name" value="Transmembrane di-heme cytochromes"/>
    <property type="match status" value="1"/>
</dbReference>
<dbReference type="PROSITE" id="PS51002">
    <property type="entry name" value="CYTB_NTER"/>
    <property type="match status" value="1"/>
</dbReference>
<keyword id="KW-0150">Chloroplast</keyword>
<keyword id="KW-0249">Electron transport</keyword>
<keyword id="KW-0349">Heme</keyword>
<keyword id="KW-0408">Iron</keyword>
<keyword id="KW-0472">Membrane</keyword>
<keyword id="KW-0479">Metal-binding</keyword>
<keyword id="KW-0602">Photosynthesis</keyword>
<keyword id="KW-0934">Plastid</keyword>
<keyword id="KW-0793">Thylakoid</keyword>
<keyword id="KW-0812">Transmembrane</keyword>
<keyword id="KW-1133">Transmembrane helix</keyword>
<keyword id="KW-0813">Transport</keyword>
<gene>
    <name evidence="1" type="primary">petB</name>
</gene>
<organism>
    <name type="scientific">Liriodendron tulipifera</name>
    <name type="common">Tuliptree</name>
    <name type="synonym">Tulip poplar</name>
    <dbReference type="NCBI Taxonomy" id="3415"/>
    <lineage>
        <taxon>Eukaryota</taxon>
        <taxon>Viridiplantae</taxon>
        <taxon>Streptophyta</taxon>
        <taxon>Embryophyta</taxon>
        <taxon>Tracheophyta</taxon>
        <taxon>Spermatophyta</taxon>
        <taxon>Magnoliopsida</taxon>
        <taxon>Magnoliidae</taxon>
        <taxon>Magnoliales</taxon>
        <taxon>Magnoliaceae</taxon>
        <taxon>Liriodendron</taxon>
    </lineage>
</organism>
<evidence type="ECO:0000255" key="1">
    <source>
        <dbReference type="HAMAP-Rule" id="MF_00633"/>
    </source>
</evidence>
<proteinExistence type="inferred from homology"/>
<geneLocation type="chloroplast"/>
<accession>Q0G9I9</accession>
<feature type="chain" id="PRO_0000275322" description="Cytochrome b6">
    <location>
        <begin position="1"/>
        <end position="215"/>
    </location>
</feature>
<feature type="transmembrane region" description="Helical" evidence="1">
    <location>
        <begin position="32"/>
        <end position="52"/>
    </location>
</feature>
<feature type="transmembrane region" description="Helical" evidence="1">
    <location>
        <begin position="90"/>
        <end position="110"/>
    </location>
</feature>
<feature type="transmembrane region" description="Helical" evidence="1">
    <location>
        <begin position="116"/>
        <end position="136"/>
    </location>
</feature>
<feature type="transmembrane region" description="Helical" evidence="1">
    <location>
        <begin position="186"/>
        <end position="206"/>
    </location>
</feature>
<feature type="binding site" description="covalent" evidence="1">
    <location>
        <position position="35"/>
    </location>
    <ligand>
        <name>heme c</name>
        <dbReference type="ChEBI" id="CHEBI:61717"/>
    </ligand>
</feature>
<feature type="binding site" description="axial binding residue" evidence="1">
    <location>
        <position position="86"/>
    </location>
    <ligand>
        <name>heme b</name>
        <dbReference type="ChEBI" id="CHEBI:60344"/>
        <label>2</label>
    </ligand>
    <ligandPart>
        <name>Fe</name>
        <dbReference type="ChEBI" id="CHEBI:18248"/>
    </ligandPart>
</feature>
<feature type="binding site" description="axial binding residue" evidence="1">
    <location>
        <position position="100"/>
    </location>
    <ligand>
        <name>heme b</name>
        <dbReference type="ChEBI" id="CHEBI:60344"/>
        <label>1</label>
    </ligand>
    <ligandPart>
        <name>Fe</name>
        <dbReference type="ChEBI" id="CHEBI:18248"/>
    </ligandPart>
</feature>
<feature type="binding site" description="axial binding residue" evidence="1">
    <location>
        <position position="187"/>
    </location>
    <ligand>
        <name>heme b</name>
        <dbReference type="ChEBI" id="CHEBI:60344"/>
        <label>2</label>
    </ligand>
    <ligandPart>
        <name>Fe</name>
        <dbReference type="ChEBI" id="CHEBI:18248"/>
    </ligandPart>
</feature>
<feature type="binding site" description="axial binding residue" evidence="1">
    <location>
        <position position="202"/>
    </location>
    <ligand>
        <name>heme b</name>
        <dbReference type="ChEBI" id="CHEBI:60344"/>
        <label>1</label>
    </ligand>
    <ligandPart>
        <name>Fe</name>
        <dbReference type="ChEBI" id="CHEBI:18248"/>
    </ligandPart>
</feature>
<name>CYB6_LIRTU</name>
<comment type="function">
    <text evidence="1">Component of the cytochrome b6-f complex, which mediates electron transfer between photosystem II (PSII) and photosystem I (PSI), cyclic electron flow around PSI, and state transitions.</text>
</comment>
<comment type="cofactor">
    <cofactor evidence="1">
        <name>heme b</name>
        <dbReference type="ChEBI" id="CHEBI:60344"/>
    </cofactor>
    <text evidence="1">Binds 2 heme b groups non-covalently with two histidine residues as axial ligands.</text>
</comment>
<comment type="cofactor">
    <cofactor evidence="1">
        <name>heme c</name>
        <dbReference type="ChEBI" id="CHEBI:61717"/>
    </cofactor>
    <text evidence="1">Binds one heme group covalently by a single cysteine link with no axial amino acid ligand. This heme was named heme ci.</text>
</comment>
<comment type="subunit">
    <text evidence="1">The 4 large subunits of the cytochrome b6-f complex are cytochrome b6, subunit IV (17 kDa polypeptide, PetD), cytochrome f and the Rieske protein, while the 4 small subunits are PetG, PetL, PetM and PetN. The complex functions as a dimer.</text>
</comment>
<comment type="subcellular location">
    <subcellularLocation>
        <location evidence="1">Plastid</location>
        <location evidence="1">Chloroplast thylakoid membrane</location>
        <topology evidence="1">Multi-pass membrane protein</topology>
    </subcellularLocation>
</comment>
<comment type="miscellaneous">
    <text evidence="1">Heme 1 (or BH or b566) is high-potential and absorbs at about 566 nm, and heme 2 (or BL or b562) is low-potential and absorbs at about 562 nm.</text>
</comment>
<comment type="similarity">
    <text evidence="1">Belongs to the cytochrome b family. PetB subfamily.</text>
</comment>
<reference key="1">
    <citation type="journal article" date="2006" name="BMC Evol. Biol.">
        <title>Complete plastid genome sequences of Drimys, Liriodendron, and Piper: implications for the phylogenetic relationships of magnoliids.</title>
        <authorList>
            <person name="Cai Z."/>
            <person name="Penaflor C."/>
            <person name="Kuehl J.V."/>
            <person name="Leebens-Mack J."/>
            <person name="Carlson J.E."/>
            <person name="dePamphilis C.W."/>
            <person name="Boore J.L."/>
            <person name="Jansen R.K."/>
        </authorList>
    </citation>
    <scope>NUCLEOTIDE SEQUENCE [LARGE SCALE GENOMIC DNA]</scope>
</reference>
<protein>
    <recommendedName>
        <fullName evidence="1">Cytochrome b6</fullName>
    </recommendedName>
</protein>
<sequence length="215" mass="24149">MSKVYDWFEERLEIQAIADDITSKYVPPHVNIFYCLGGITLTCFLVQVATGFAMTFYYRPTVTEAFASVQYIMTEANFGWLIRSVHRWSASMMVLMMILHVFRVYLTGGFKKPRELTWVTGVILAVLTASFGVTGYSLPRDQIGYWAVKIVTGVPEAIPVIGSPLVELLRGSASVGQSTLTRFYSLHTFVLPLLTAVFMLMHFPMIRKQGISGPL</sequence>